<sequence>MVKNSFISIISQEENKENRGSVEFQIVSFTNKIDRLTSHLQLHKKDYLSERGLLKILGKRHRLLAYLSKKTRVDYKEFKELIDQLDKTKTRVDYKEFKELIDQLEKKTR</sequence>
<reference key="1">
    <citation type="journal article" date="2007" name="Proc. Natl. Acad. Sci. U.S.A.">
        <title>Analysis of 81 genes from 64 plastid genomes resolves relationships in angiosperms and identifies genome-scale evolutionary patterns.</title>
        <authorList>
            <person name="Jansen R.K."/>
            <person name="Cai Z."/>
            <person name="Raubeson L.A."/>
            <person name="Daniell H."/>
            <person name="dePamphilis C.W."/>
            <person name="Leebens-Mack J."/>
            <person name="Muller K.F."/>
            <person name="Guisinger-Bellian M."/>
            <person name="Haberle R.C."/>
            <person name="Hansen A.K."/>
            <person name="Chumley T.W."/>
            <person name="Lee S.B."/>
            <person name="Peery R."/>
            <person name="McNeal J.R."/>
            <person name="Kuehl J.V."/>
            <person name="Boore J.L."/>
        </authorList>
    </citation>
    <scope>NUCLEOTIDE SEQUENCE [GENOMIC DNA]</scope>
</reference>
<reference key="2">
    <citation type="journal article" date="2008" name="J. Mol. Evol.">
        <title>Extensive rearrangements in the chloroplast genome of Trachelium caeruleum are associated with repeats and tRNA genes.</title>
        <authorList>
            <person name="Haberle R.C."/>
            <person name="Fourcade H.M."/>
            <person name="Boore J.L."/>
            <person name="Jansen R.K."/>
        </authorList>
    </citation>
    <scope>NUCLEOTIDE SEQUENCE [LARGE SCALE GENOMIC DNA]</scope>
</reference>
<protein>
    <recommendedName>
        <fullName evidence="2">Small ribosomal subunit protein uS15c</fullName>
    </recommendedName>
    <alternativeName>
        <fullName>30S ribosomal protein S15, chloroplastic</fullName>
    </alternativeName>
</protein>
<accession>A9QCA5</accession>
<dbReference type="EMBL" id="EU017291">
    <property type="protein sequence ID" value="ABU85698.1"/>
    <property type="molecule type" value="Genomic_DNA"/>
</dbReference>
<dbReference type="EMBL" id="EU090187">
    <property type="protein sequence ID" value="ABV26526.1"/>
    <property type="molecule type" value="Genomic_DNA"/>
</dbReference>
<dbReference type="EMBL" id="EU090187">
    <property type="protein sequence ID" value="ABV26540.1"/>
    <property type="molecule type" value="Genomic_DNA"/>
</dbReference>
<dbReference type="SMR" id="A9QCA5"/>
<dbReference type="GO" id="GO:0009507">
    <property type="term" value="C:chloroplast"/>
    <property type="evidence" value="ECO:0007669"/>
    <property type="project" value="UniProtKB-SubCell"/>
</dbReference>
<dbReference type="GO" id="GO:1990904">
    <property type="term" value="C:ribonucleoprotein complex"/>
    <property type="evidence" value="ECO:0007669"/>
    <property type="project" value="UniProtKB-KW"/>
</dbReference>
<dbReference type="GO" id="GO:0005840">
    <property type="term" value="C:ribosome"/>
    <property type="evidence" value="ECO:0007669"/>
    <property type="project" value="UniProtKB-KW"/>
</dbReference>
<dbReference type="GO" id="GO:0005509">
    <property type="term" value="F:calcium ion binding"/>
    <property type="evidence" value="ECO:0007669"/>
    <property type="project" value="InterPro"/>
</dbReference>
<dbReference type="GO" id="GO:0003735">
    <property type="term" value="F:structural constituent of ribosome"/>
    <property type="evidence" value="ECO:0007669"/>
    <property type="project" value="InterPro"/>
</dbReference>
<dbReference type="GO" id="GO:0006412">
    <property type="term" value="P:translation"/>
    <property type="evidence" value="ECO:0007669"/>
    <property type="project" value="UniProtKB-UniRule"/>
</dbReference>
<dbReference type="CDD" id="cd00353">
    <property type="entry name" value="Ribosomal_S15p_S13e"/>
    <property type="match status" value="1"/>
</dbReference>
<dbReference type="Gene3D" id="1.10.287.10">
    <property type="entry name" value="S15/NS1, RNA-binding"/>
    <property type="match status" value="1"/>
</dbReference>
<dbReference type="HAMAP" id="MF_01343_B">
    <property type="entry name" value="Ribosomal_uS15_B"/>
    <property type="match status" value="1"/>
</dbReference>
<dbReference type="InterPro" id="IPR002048">
    <property type="entry name" value="EF_hand_dom"/>
</dbReference>
<dbReference type="InterPro" id="IPR000589">
    <property type="entry name" value="Ribosomal_uS15"/>
</dbReference>
<dbReference type="InterPro" id="IPR005290">
    <property type="entry name" value="Ribosomal_uS15_bac-type"/>
</dbReference>
<dbReference type="InterPro" id="IPR009068">
    <property type="entry name" value="uS15_NS1_RNA-bd_sf"/>
</dbReference>
<dbReference type="NCBIfam" id="TIGR00952">
    <property type="entry name" value="S15_bact"/>
    <property type="match status" value="1"/>
</dbReference>
<dbReference type="PANTHER" id="PTHR23321">
    <property type="entry name" value="RIBOSOMAL PROTEIN S15, BACTERIAL AND ORGANELLAR"/>
    <property type="match status" value="1"/>
</dbReference>
<dbReference type="PANTHER" id="PTHR23321:SF26">
    <property type="entry name" value="SMALL RIBOSOMAL SUBUNIT PROTEIN US15M"/>
    <property type="match status" value="1"/>
</dbReference>
<dbReference type="Pfam" id="PF00312">
    <property type="entry name" value="Ribosomal_S15"/>
    <property type="match status" value="1"/>
</dbReference>
<dbReference type="SMART" id="SM01387">
    <property type="entry name" value="Ribosomal_S15"/>
    <property type="match status" value="1"/>
</dbReference>
<dbReference type="SUPFAM" id="SSF47060">
    <property type="entry name" value="S15/NS1 RNA-binding domain"/>
    <property type="match status" value="1"/>
</dbReference>
<dbReference type="PROSITE" id="PS00362">
    <property type="entry name" value="RIBOSOMAL_S15"/>
    <property type="match status" value="1"/>
</dbReference>
<name>RR15_TRACE</name>
<evidence type="ECO:0000250" key="1"/>
<evidence type="ECO:0000305" key="2"/>
<geneLocation type="chloroplast"/>
<comment type="subunit">
    <text evidence="1">Part of the 30S ribosomal subunit.</text>
</comment>
<comment type="subcellular location">
    <subcellularLocation>
        <location>Plastid</location>
        <location>Chloroplast</location>
    </subcellularLocation>
</comment>
<comment type="similarity">
    <text evidence="2">Belongs to the universal ribosomal protein uS15 family.</text>
</comment>
<gene>
    <name type="primary">rps15-A</name>
</gene>
<gene>
    <name type="primary">rps15-B</name>
</gene>
<organism>
    <name type="scientific">Trachelium caeruleum</name>
    <name type="common">Blue throatwort</name>
    <dbReference type="NCBI Taxonomy" id="28494"/>
    <lineage>
        <taxon>Eukaryota</taxon>
        <taxon>Viridiplantae</taxon>
        <taxon>Streptophyta</taxon>
        <taxon>Embryophyta</taxon>
        <taxon>Tracheophyta</taxon>
        <taxon>Spermatophyta</taxon>
        <taxon>Magnoliopsida</taxon>
        <taxon>eudicotyledons</taxon>
        <taxon>Gunneridae</taxon>
        <taxon>Pentapetalae</taxon>
        <taxon>asterids</taxon>
        <taxon>campanulids</taxon>
        <taxon>Asterales</taxon>
        <taxon>Campanulaceae</taxon>
        <taxon>Trachelium</taxon>
    </lineage>
</organism>
<feature type="chain" id="PRO_0000354278" description="Small ribosomal subunit protein uS15c">
    <location>
        <begin position="1"/>
        <end position="109"/>
    </location>
</feature>
<proteinExistence type="inferred from homology"/>
<keyword id="KW-0150">Chloroplast</keyword>
<keyword id="KW-0934">Plastid</keyword>
<keyword id="KW-0687">Ribonucleoprotein</keyword>
<keyword id="KW-0689">Ribosomal protein</keyword>